<keyword id="KW-0004">4Fe-4S</keyword>
<keyword id="KW-0408">Iron</keyword>
<keyword id="KW-0411">Iron-sulfur</keyword>
<keyword id="KW-0472">Membrane</keyword>
<keyword id="KW-0479">Metal-binding</keyword>
<keyword id="KW-0520">NAD</keyword>
<keyword id="KW-0994">Organellar chromatophore</keyword>
<keyword id="KW-0934">Plastid</keyword>
<keyword id="KW-0874">Quinone</keyword>
<keyword id="KW-0793">Thylakoid</keyword>
<keyword id="KW-1278">Translocase</keyword>
<keyword id="KW-0813">Transport</keyword>
<keyword id="KW-0830">Ubiquinone</keyword>
<feature type="chain" id="PRO_0000358588" description="NAD(P)H-quinone oxidoreductase subunit K, organellar chromatophore">
    <location>
        <begin position="1"/>
        <end position="246"/>
    </location>
</feature>
<feature type="binding site" evidence="2">
    <location>
        <position position="58"/>
    </location>
    <ligand>
        <name>[4Fe-4S] cluster</name>
        <dbReference type="ChEBI" id="CHEBI:49883"/>
    </ligand>
</feature>
<feature type="binding site" evidence="2">
    <location>
        <position position="59"/>
    </location>
    <ligand>
        <name>[4Fe-4S] cluster</name>
        <dbReference type="ChEBI" id="CHEBI:49883"/>
    </ligand>
</feature>
<feature type="binding site" evidence="2">
    <location>
        <position position="123"/>
    </location>
    <ligand>
        <name>[4Fe-4S] cluster</name>
        <dbReference type="ChEBI" id="CHEBI:49883"/>
    </ligand>
</feature>
<feature type="binding site" evidence="2">
    <location>
        <position position="154"/>
    </location>
    <ligand>
        <name>[4Fe-4S] cluster</name>
        <dbReference type="ChEBI" id="CHEBI:49883"/>
    </ligand>
</feature>
<comment type="function">
    <text evidence="1">NDH-1 shuttles electrons from NADH, via FMN and iron-sulfur (Fe-S) centers, to quinones in the respiratory chain. Couples the redox reaction to proton translocation (for every two electrons transferred, four hydrogen ions are translocated across the cytoplasmic membrane), and thus conserves the redox energy in a proton gradient (By similarity).</text>
</comment>
<comment type="catalytic activity">
    <reaction evidence="2">
        <text>a quinone + NADH + H(+) = a quinol + NAD(+)</text>
        <dbReference type="Rhea" id="RHEA:46160"/>
        <dbReference type="ChEBI" id="CHEBI:15378"/>
        <dbReference type="ChEBI" id="CHEBI:24646"/>
        <dbReference type="ChEBI" id="CHEBI:57540"/>
        <dbReference type="ChEBI" id="CHEBI:57945"/>
        <dbReference type="ChEBI" id="CHEBI:132124"/>
    </reaction>
</comment>
<comment type="cofactor">
    <cofactor evidence="2">
        <name>[4Fe-4S] cluster</name>
        <dbReference type="ChEBI" id="CHEBI:49883"/>
    </cofactor>
    <text evidence="2">Binds 1 [4Fe-4S] cluster.</text>
</comment>
<comment type="subunit">
    <text evidence="1">NDH-1 is composed of 14 different subunits. Subunits nuoB, C, D, E, F, and G constitute the peripheral sector of the complex (By similarity).</text>
</comment>
<comment type="subcellular location">
    <subcellularLocation>
        <location evidence="1">Plastid</location>
        <location evidence="1">Organellar chromatophore thylakoid membrane</location>
        <topology evidence="2">Peripheral membrane protein</topology>
        <orientation evidence="2">Stromal side</orientation>
    </subcellularLocation>
</comment>
<comment type="similarity">
    <text evidence="2">Belongs to the complex I 20 kDa subunit family.</text>
</comment>
<reference key="1">
    <citation type="journal article" date="2008" name="Curr. Biol.">
        <title>Chromatophore genome sequence of Paulinella sheds light on acquisition of photosynthesis by eukaryotes.</title>
        <authorList>
            <person name="Nowack E.C.M."/>
            <person name="Melkonian M."/>
            <person name="Gloeckner G."/>
        </authorList>
    </citation>
    <scope>NUCLEOTIDE SEQUENCE [LARGE SCALE GENOMIC DNA]</scope>
</reference>
<sequence>MTPSIDALRDFRASTCNLVGTPTVTNDLSENIILTSLDDLHNWARLSSLWPLLYGTACCFIEFAALIGSRFDFDRFGLVPRSSPRQADLIIVAGTVTMKMAPALVRLYEQMPEPKYVIAMGACTITGGMFSSDSTTAVRGVDKLIPVDLYLPGCPPRPEAIFDAVIKLRKKVGNEALRERGKLLPTHRYFTVAHKMKQVKPIITGTYLRAKTQQNALQAGVALPVDFKAEALPTKVILSNSLSLDN</sequence>
<evidence type="ECO:0000250" key="1"/>
<evidence type="ECO:0000255" key="2">
    <source>
        <dbReference type="HAMAP-Rule" id="MF_01356"/>
    </source>
</evidence>
<gene>
    <name evidence="2" type="primary">ndhK</name>
    <name type="synonym">nuoB</name>
    <name type="ordered locus">PCC_0495</name>
</gene>
<organism>
    <name type="scientific">Paulinella chromatophora</name>
    <dbReference type="NCBI Taxonomy" id="39717"/>
    <lineage>
        <taxon>Eukaryota</taxon>
        <taxon>Sar</taxon>
        <taxon>Rhizaria</taxon>
        <taxon>Cercozoa</taxon>
        <taxon>Imbricatea</taxon>
        <taxon>Silicofilosea</taxon>
        <taxon>Euglyphida</taxon>
        <taxon>Paulinellidae</taxon>
        <taxon>Paulinella</taxon>
    </lineage>
</organism>
<geneLocation type="organellar chromatophore"/>
<protein>
    <recommendedName>
        <fullName evidence="2">NAD(P)H-quinone oxidoreductase subunit K, organellar chromatophore</fullName>
        <ecNumber evidence="2">7.1.1.-</ecNumber>
    </recommendedName>
    <alternativeName>
        <fullName evidence="2">NAD(P)H dehydrogenase subunit K</fullName>
    </alternativeName>
    <alternativeName>
        <fullName evidence="2">NADH-plastoquinone oxidoreductase subunit K</fullName>
    </alternativeName>
</protein>
<dbReference type="EC" id="7.1.1.-" evidence="2"/>
<dbReference type="EMBL" id="CP000815">
    <property type="protein sequence ID" value="ACB42931.1"/>
    <property type="molecule type" value="Genomic_DNA"/>
</dbReference>
<dbReference type="RefSeq" id="YP_002049141.1">
    <property type="nucleotide sequence ID" value="NC_011087.1"/>
</dbReference>
<dbReference type="SMR" id="B1X4R2"/>
<dbReference type="GeneID" id="6481479"/>
<dbReference type="GO" id="GO:0070118">
    <property type="term" value="C:organellar chromatophore thylakoid membrane"/>
    <property type="evidence" value="ECO:0007669"/>
    <property type="project" value="UniProtKB-SubCell"/>
</dbReference>
<dbReference type="GO" id="GO:0005886">
    <property type="term" value="C:plasma membrane"/>
    <property type="evidence" value="ECO:0007669"/>
    <property type="project" value="UniProtKB-UniRule"/>
</dbReference>
<dbReference type="GO" id="GO:0009536">
    <property type="term" value="C:plastid"/>
    <property type="evidence" value="ECO:0007669"/>
    <property type="project" value="UniProtKB-KW"/>
</dbReference>
<dbReference type="GO" id="GO:0045271">
    <property type="term" value="C:respiratory chain complex I"/>
    <property type="evidence" value="ECO:0007669"/>
    <property type="project" value="TreeGrafter"/>
</dbReference>
<dbReference type="GO" id="GO:0051539">
    <property type="term" value="F:4 iron, 4 sulfur cluster binding"/>
    <property type="evidence" value="ECO:0007669"/>
    <property type="project" value="UniProtKB-KW"/>
</dbReference>
<dbReference type="GO" id="GO:0005506">
    <property type="term" value="F:iron ion binding"/>
    <property type="evidence" value="ECO:0007669"/>
    <property type="project" value="UniProtKB-UniRule"/>
</dbReference>
<dbReference type="GO" id="GO:0008137">
    <property type="term" value="F:NADH dehydrogenase (ubiquinone) activity"/>
    <property type="evidence" value="ECO:0007669"/>
    <property type="project" value="InterPro"/>
</dbReference>
<dbReference type="GO" id="GO:0050136">
    <property type="term" value="F:NADH:ubiquinone reductase (non-electrogenic) activity"/>
    <property type="evidence" value="ECO:0007669"/>
    <property type="project" value="UniProtKB-UniRule"/>
</dbReference>
<dbReference type="GO" id="GO:0048038">
    <property type="term" value="F:quinone binding"/>
    <property type="evidence" value="ECO:0007669"/>
    <property type="project" value="UniProtKB-KW"/>
</dbReference>
<dbReference type="GO" id="GO:0009060">
    <property type="term" value="P:aerobic respiration"/>
    <property type="evidence" value="ECO:0007669"/>
    <property type="project" value="TreeGrafter"/>
</dbReference>
<dbReference type="GO" id="GO:0015990">
    <property type="term" value="P:electron transport coupled proton transport"/>
    <property type="evidence" value="ECO:0007669"/>
    <property type="project" value="TreeGrafter"/>
</dbReference>
<dbReference type="FunFam" id="3.40.50.12280:FF:000003">
    <property type="entry name" value="NAD(P)H-quinone oxidoreductase subunit K, chloroplastic"/>
    <property type="match status" value="1"/>
</dbReference>
<dbReference type="Gene3D" id="3.40.50.12280">
    <property type="match status" value="1"/>
</dbReference>
<dbReference type="HAMAP" id="MF_01356">
    <property type="entry name" value="NDH1_NuoB"/>
    <property type="match status" value="1"/>
</dbReference>
<dbReference type="InterPro" id="IPR006137">
    <property type="entry name" value="NADH_UbQ_OxRdtase-like_20kDa"/>
</dbReference>
<dbReference type="InterPro" id="IPR006138">
    <property type="entry name" value="NADH_UQ_OxRdtase_20Kd_su"/>
</dbReference>
<dbReference type="NCBIfam" id="TIGR01957">
    <property type="entry name" value="nuoB_fam"/>
    <property type="match status" value="1"/>
</dbReference>
<dbReference type="NCBIfam" id="NF005012">
    <property type="entry name" value="PRK06411.1"/>
    <property type="match status" value="1"/>
</dbReference>
<dbReference type="PANTHER" id="PTHR11995">
    <property type="entry name" value="NADH DEHYDROGENASE"/>
    <property type="match status" value="1"/>
</dbReference>
<dbReference type="PANTHER" id="PTHR11995:SF14">
    <property type="entry name" value="NADH DEHYDROGENASE [UBIQUINONE] IRON-SULFUR PROTEIN 7, MITOCHONDRIAL"/>
    <property type="match status" value="1"/>
</dbReference>
<dbReference type="Pfam" id="PF01058">
    <property type="entry name" value="Oxidored_q6"/>
    <property type="match status" value="1"/>
</dbReference>
<dbReference type="SUPFAM" id="SSF56770">
    <property type="entry name" value="HydA/Nqo6-like"/>
    <property type="match status" value="1"/>
</dbReference>
<dbReference type="PROSITE" id="PS01150">
    <property type="entry name" value="COMPLEX1_20K"/>
    <property type="match status" value="1"/>
</dbReference>
<proteinExistence type="inferred from homology"/>
<accession>B1X4R2</accession>
<name>NDHK_PAUCH</name>